<reference key="1">
    <citation type="submission" date="2003-01" db="EMBL/GenBank/DDBJ databases">
        <title>Chloroplast DNA phylogeny of tribe Heliantheae (Asteraceae).</title>
        <authorList>
            <person name="Panero J.L."/>
            <person name="Baldwin B.G."/>
            <person name="Schilling E.E."/>
            <person name="Clevinger J.A."/>
        </authorList>
    </citation>
    <scope>NUCLEOTIDE SEQUENCE [GENOMIC DNA]</scope>
</reference>
<protein>
    <recommendedName>
        <fullName evidence="1">NAD(P)H-quinone oxidoreductase subunit I, chloroplastic</fullName>
        <ecNumber evidence="1">7.1.1.-</ecNumber>
    </recommendedName>
    <alternativeName>
        <fullName evidence="1">NAD(P)H dehydrogenase subunit I</fullName>
        <shortName evidence="1">NDH subunit I</shortName>
    </alternativeName>
    <alternativeName>
        <fullName evidence="1">NADH-plastoquinone oxidoreductase subunit I</fullName>
    </alternativeName>
</protein>
<comment type="function">
    <text evidence="1">NDH shuttles electrons from NAD(P)H:plastoquinone, via FMN and iron-sulfur (Fe-S) centers, to quinones in the photosynthetic chain and possibly in a chloroplast respiratory chain. The immediate electron acceptor for the enzyme in this species is believed to be plastoquinone. Couples the redox reaction to proton translocation, and thus conserves the redox energy in a proton gradient.</text>
</comment>
<comment type="catalytic activity">
    <reaction evidence="1">
        <text>a plastoquinone + NADH + (n+1) H(+)(in) = a plastoquinol + NAD(+) + n H(+)(out)</text>
        <dbReference type="Rhea" id="RHEA:42608"/>
        <dbReference type="Rhea" id="RHEA-COMP:9561"/>
        <dbReference type="Rhea" id="RHEA-COMP:9562"/>
        <dbReference type="ChEBI" id="CHEBI:15378"/>
        <dbReference type="ChEBI" id="CHEBI:17757"/>
        <dbReference type="ChEBI" id="CHEBI:57540"/>
        <dbReference type="ChEBI" id="CHEBI:57945"/>
        <dbReference type="ChEBI" id="CHEBI:62192"/>
    </reaction>
</comment>
<comment type="catalytic activity">
    <reaction evidence="1">
        <text>a plastoquinone + NADPH + (n+1) H(+)(in) = a plastoquinol + NADP(+) + n H(+)(out)</text>
        <dbReference type="Rhea" id="RHEA:42612"/>
        <dbReference type="Rhea" id="RHEA-COMP:9561"/>
        <dbReference type="Rhea" id="RHEA-COMP:9562"/>
        <dbReference type="ChEBI" id="CHEBI:15378"/>
        <dbReference type="ChEBI" id="CHEBI:17757"/>
        <dbReference type="ChEBI" id="CHEBI:57783"/>
        <dbReference type="ChEBI" id="CHEBI:58349"/>
        <dbReference type="ChEBI" id="CHEBI:62192"/>
    </reaction>
</comment>
<comment type="cofactor">
    <cofactor evidence="1">
        <name>[4Fe-4S] cluster</name>
        <dbReference type="ChEBI" id="CHEBI:49883"/>
    </cofactor>
    <text evidence="1">Binds 2 [4Fe-4S] clusters per subunit.</text>
</comment>
<comment type="subunit">
    <text evidence="1">NDH is composed of at least 16 different subunits, 5 of which are encoded in the nucleus.</text>
</comment>
<comment type="subcellular location">
    <subcellularLocation>
        <location evidence="1">Plastid</location>
        <location evidence="1">Chloroplast thylakoid membrane</location>
        <topology evidence="1">Peripheral membrane protein</topology>
    </subcellularLocation>
</comment>
<comment type="similarity">
    <text evidence="1">Belongs to the complex I 23 kDa subunit family.</text>
</comment>
<feature type="chain" id="PRO_0000250826" description="NAD(P)H-quinone oxidoreductase subunit I, chloroplastic">
    <location>
        <begin position="1"/>
        <end position="166"/>
    </location>
</feature>
<feature type="domain" description="4Fe-4S ferredoxin-type 1" evidence="1">
    <location>
        <begin position="55"/>
        <end position="84"/>
    </location>
</feature>
<feature type="domain" description="4Fe-4S ferredoxin-type 2" evidence="1">
    <location>
        <begin position="95"/>
        <end position="124"/>
    </location>
</feature>
<feature type="binding site" evidence="1">
    <location>
        <position position="64"/>
    </location>
    <ligand>
        <name>[4Fe-4S] cluster</name>
        <dbReference type="ChEBI" id="CHEBI:49883"/>
        <label>1</label>
    </ligand>
</feature>
<feature type="binding site" evidence="1">
    <location>
        <position position="67"/>
    </location>
    <ligand>
        <name>[4Fe-4S] cluster</name>
        <dbReference type="ChEBI" id="CHEBI:49883"/>
        <label>1</label>
    </ligand>
</feature>
<feature type="binding site" evidence="1">
    <location>
        <position position="70"/>
    </location>
    <ligand>
        <name>[4Fe-4S] cluster</name>
        <dbReference type="ChEBI" id="CHEBI:49883"/>
        <label>1</label>
    </ligand>
</feature>
<feature type="binding site" evidence="1">
    <location>
        <position position="74"/>
    </location>
    <ligand>
        <name>[4Fe-4S] cluster</name>
        <dbReference type="ChEBI" id="CHEBI:49883"/>
        <label>2</label>
    </ligand>
</feature>
<feature type="binding site" evidence="1">
    <location>
        <position position="104"/>
    </location>
    <ligand>
        <name>[4Fe-4S] cluster</name>
        <dbReference type="ChEBI" id="CHEBI:49883"/>
        <label>2</label>
    </ligand>
</feature>
<feature type="binding site" evidence="1">
    <location>
        <position position="107"/>
    </location>
    <ligand>
        <name>[4Fe-4S] cluster</name>
        <dbReference type="ChEBI" id="CHEBI:49883"/>
        <label>2</label>
    </ligand>
</feature>
<feature type="binding site" evidence="1">
    <location>
        <position position="110"/>
    </location>
    <ligand>
        <name>[4Fe-4S] cluster</name>
        <dbReference type="ChEBI" id="CHEBI:49883"/>
        <label>2</label>
    </ligand>
</feature>
<feature type="binding site" evidence="1">
    <location>
        <position position="114"/>
    </location>
    <ligand>
        <name>[4Fe-4S] cluster</name>
        <dbReference type="ChEBI" id="CHEBI:49883"/>
        <label>1</label>
    </ligand>
</feature>
<keyword id="KW-0004">4Fe-4S</keyword>
<keyword id="KW-0150">Chloroplast</keyword>
<keyword id="KW-0408">Iron</keyword>
<keyword id="KW-0411">Iron-sulfur</keyword>
<keyword id="KW-0472">Membrane</keyword>
<keyword id="KW-0479">Metal-binding</keyword>
<keyword id="KW-0520">NAD</keyword>
<keyword id="KW-0521">NADP</keyword>
<keyword id="KW-0934">Plastid</keyword>
<keyword id="KW-0618">Plastoquinone</keyword>
<keyword id="KW-0874">Quinone</keyword>
<keyword id="KW-0677">Repeat</keyword>
<keyword id="KW-0793">Thylakoid</keyword>
<keyword id="KW-1278">Translocase</keyword>
<dbReference type="EC" id="7.1.1.-" evidence="1"/>
<dbReference type="EMBL" id="AF383828">
    <property type="protein sequence ID" value="AAN61769.1"/>
    <property type="molecule type" value="Genomic_DNA"/>
</dbReference>
<dbReference type="SMR" id="Q8HVN5"/>
<dbReference type="GO" id="GO:0009535">
    <property type="term" value="C:chloroplast thylakoid membrane"/>
    <property type="evidence" value="ECO:0007669"/>
    <property type="project" value="UniProtKB-SubCell"/>
</dbReference>
<dbReference type="GO" id="GO:0051539">
    <property type="term" value="F:4 iron, 4 sulfur cluster binding"/>
    <property type="evidence" value="ECO:0007669"/>
    <property type="project" value="UniProtKB-KW"/>
</dbReference>
<dbReference type="GO" id="GO:0005506">
    <property type="term" value="F:iron ion binding"/>
    <property type="evidence" value="ECO:0007669"/>
    <property type="project" value="UniProtKB-UniRule"/>
</dbReference>
<dbReference type="GO" id="GO:0008137">
    <property type="term" value="F:NADH dehydrogenase (ubiquinone) activity"/>
    <property type="evidence" value="ECO:0007669"/>
    <property type="project" value="InterPro"/>
</dbReference>
<dbReference type="GO" id="GO:0048038">
    <property type="term" value="F:quinone binding"/>
    <property type="evidence" value="ECO:0007669"/>
    <property type="project" value="UniProtKB-KW"/>
</dbReference>
<dbReference type="GO" id="GO:0019684">
    <property type="term" value="P:photosynthesis, light reaction"/>
    <property type="evidence" value="ECO:0007669"/>
    <property type="project" value="UniProtKB-UniRule"/>
</dbReference>
<dbReference type="FunFam" id="3.30.70.3270:FF:000006">
    <property type="entry name" value="NAD(P)H-quinone oxidoreductase subunit I, chloroplastic"/>
    <property type="match status" value="1"/>
</dbReference>
<dbReference type="Gene3D" id="3.30.70.3270">
    <property type="match status" value="1"/>
</dbReference>
<dbReference type="HAMAP" id="MF_01351">
    <property type="entry name" value="NDH1_NuoI"/>
    <property type="match status" value="1"/>
</dbReference>
<dbReference type="InterPro" id="IPR017896">
    <property type="entry name" value="4Fe4S_Fe-S-bd"/>
</dbReference>
<dbReference type="InterPro" id="IPR017900">
    <property type="entry name" value="4Fe4S_Fe_S_CS"/>
</dbReference>
<dbReference type="InterPro" id="IPR010226">
    <property type="entry name" value="NADH_quinone_OxRdtase_chainI"/>
</dbReference>
<dbReference type="InterPro" id="IPR004497">
    <property type="entry name" value="NDHI"/>
</dbReference>
<dbReference type="NCBIfam" id="TIGR00403">
    <property type="entry name" value="ndhI"/>
    <property type="match status" value="1"/>
</dbReference>
<dbReference type="NCBIfam" id="TIGR01971">
    <property type="entry name" value="NuoI"/>
    <property type="match status" value="1"/>
</dbReference>
<dbReference type="NCBIfam" id="NF004537">
    <property type="entry name" value="PRK05888.1-3"/>
    <property type="match status" value="1"/>
</dbReference>
<dbReference type="PANTHER" id="PTHR47275">
    <property type="entry name" value="NAD(P)H-QUINONE OXIDOREDUCTASE SUBUNIT I, CHLOROPLASTIC"/>
    <property type="match status" value="1"/>
</dbReference>
<dbReference type="PANTHER" id="PTHR47275:SF1">
    <property type="entry name" value="NAD(P)H-QUINONE OXIDOREDUCTASE SUBUNIT I, CHLOROPLASTIC"/>
    <property type="match status" value="1"/>
</dbReference>
<dbReference type="Pfam" id="PF00037">
    <property type="entry name" value="Fer4"/>
    <property type="match status" value="2"/>
</dbReference>
<dbReference type="SUPFAM" id="SSF54862">
    <property type="entry name" value="4Fe-4S ferredoxins"/>
    <property type="match status" value="1"/>
</dbReference>
<dbReference type="PROSITE" id="PS00198">
    <property type="entry name" value="4FE4S_FER_1"/>
    <property type="match status" value="2"/>
</dbReference>
<dbReference type="PROSITE" id="PS51379">
    <property type="entry name" value="4FE4S_FER_2"/>
    <property type="match status" value="2"/>
</dbReference>
<geneLocation type="chloroplast"/>
<proteinExistence type="inferred from homology"/>
<sequence length="166" mass="19456">MFPMVTKFMNYGQQTVRAARYIGQGFIITLSHANRLPVTIQYPYEKLITSERFRGRIHFEFDKCIACEVCVRVCPIDLPVVDWKLETDIRKKRLLNYSIDFGICIFCGNCVEYCPTNCLSMTEEYELSTYDRHELNYNQIALGRLPMSIIDDYTIRTILNLPEIKT</sequence>
<organism>
    <name type="scientific">Palafoxia arida</name>
    <name type="common">Spanish needles</name>
    <dbReference type="NCBI Taxonomy" id="41620"/>
    <lineage>
        <taxon>Eukaryota</taxon>
        <taxon>Viridiplantae</taxon>
        <taxon>Streptophyta</taxon>
        <taxon>Embryophyta</taxon>
        <taxon>Tracheophyta</taxon>
        <taxon>Spermatophyta</taxon>
        <taxon>Magnoliopsida</taxon>
        <taxon>eudicotyledons</taxon>
        <taxon>Gunneridae</taxon>
        <taxon>Pentapetalae</taxon>
        <taxon>asterids</taxon>
        <taxon>campanulids</taxon>
        <taxon>Asterales</taxon>
        <taxon>Asteraceae</taxon>
        <taxon>Asteroideae</taxon>
        <taxon>Heliantheae alliance</taxon>
        <taxon>Bahieae</taxon>
        <taxon>Palafoxia</taxon>
    </lineage>
</organism>
<name>NDHI_PALAR</name>
<evidence type="ECO:0000255" key="1">
    <source>
        <dbReference type="HAMAP-Rule" id="MF_01351"/>
    </source>
</evidence>
<gene>
    <name evidence="1" type="primary">ndhI</name>
</gene>
<accession>Q8HVN5</accession>